<accession>Q24TD8</accession>
<dbReference type="EC" id="2.1.1.199" evidence="1"/>
<dbReference type="EMBL" id="AP008230">
    <property type="protein sequence ID" value="BAE84704.1"/>
    <property type="molecule type" value="Genomic_DNA"/>
</dbReference>
<dbReference type="RefSeq" id="WP_011460703.1">
    <property type="nucleotide sequence ID" value="NC_007907.1"/>
</dbReference>
<dbReference type="SMR" id="Q24TD8"/>
<dbReference type="STRING" id="138119.DSY2915"/>
<dbReference type="KEGG" id="dsy:DSY2915"/>
<dbReference type="eggNOG" id="COG0275">
    <property type="taxonomic scope" value="Bacteria"/>
</dbReference>
<dbReference type="HOGENOM" id="CLU_038422_2_0_9"/>
<dbReference type="Proteomes" id="UP000001946">
    <property type="component" value="Chromosome"/>
</dbReference>
<dbReference type="GO" id="GO:0005737">
    <property type="term" value="C:cytoplasm"/>
    <property type="evidence" value="ECO:0007669"/>
    <property type="project" value="UniProtKB-SubCell"/>
</dbReference>
<dbReference type="GO" id="GO:0071424">
    <property type="term" value="F:rRNA (cytosine-N4-)-methyltransferase activity"/>
    <property type="evidence" value="ECO:0007669"/>
    <property type="project" value="UniProtKB-UniRule"/>
</dbReference>
<dbReference type="GO" id="GO:0070475">
    <property type="term" value="P:rRNA base methylation"/>
    <property type="evidence" value="ECO:0007669"/>
    <property type="project" value="UniProtKB-UniRule"/>
</dbReference>
<dbReference type="FunFam" id="1.10.150.170:FF:000001">
    <property type="entry name" value="Ribosomal RNA small subunit methyltransferase H"/>
    <property type="match status" value="1"/>
</dbReference>
<dbReference type="Gene3D" id="1.10.150.170">
    <property type="entry name" value="Putative methyltransferase TM0872, insert domain"/>
    <property type="match status" value="1"/>
</dbReference>
<dbReference type="Gene3D" id="3.40.50.150">
    <property type="entry name" value="Vaccinia Virus protein VP39"/>
    <property type="match status" value="1"/>
</dbReference>
<dbReference type="HAMAP" id="MF_01007">
    <property type="entry name" value="16SrRNA_methyltr_H"/>
    <property type="match status" value="1"/>
</dbReference>
<dbReference type="InterPro" id="IPR002903">
    <property type="entry name" value="RsmH"/>
</dbReference>
<dbReference type="InterPro" id="IPR023397">
    <property type="entry name" value="SAM-dep_MeTrfase_MraW_recog"/>
</dbReference>
<dbReference type="InterPro" id="IPR029063">
    <property type="entry name" value="SAM-dependent_MTases_sf"/>
</dbReference>
<dbReference type="NCBIfam" id="TIGR00006">
    <property type="entry name" value="16S rRNA (cytosine(1402)-N(4))-methyltransferase RsmH"/>
    <property type="match status" value="1"/>
</dbReference>
<dbReference type="PANTHER" id="PTHR11265:SF0">
    <property type="entry name" value="12S RRNA N4-METHYLCYTIDINE METHYLTRANSFERASE"/>
    <property type="match status" value="1"/>
</dbReference>
<dbReference type="PANTHER" id="PTHR11265">
    <property type="entry name" value="S-ADENOSYL-METHYLTRANSFERASE MRAW"/>
    <property type="match status" value="1"/>
</dbReference>
<dbReference type="Pfam" id="PF01795">
    <property type="entry name" value="Methyltransf_5"/>
    <property type="match status" value="1"/>
</dbReference>
<dbReference type="PIRSF" id="PIRSF004486">
    <property type="entry name" value="MraW"/>
    <property type="match status" value="1"/>
</dbReference>
<dbReference type="SUPFAM" id="SSF81799">
    <property type="entry name" value="Putative methyltransferase TM0872, insert domain"/>
    <property type="match status" value="1"/>
</dbReference>
<dbReference type="SUPFAM" id="SSF53335">
    <property type="entry name" value="S-adenosyl-L-methionine-dependent methyltransferases"/>
    <property type="match status" value="1"/>
</dbReference>
<feature type="chain" id="PRO_0000386846" description="Ribosomal RNA small subunit methyltransferase H">
    <location>
        <begin position="1"/>
        <end position="310"/>
    </location>
</feature>
<feature type="binding site" evidence="1">
    <location>
        <begin position="33"/>
        <end position="35"/>
    </location>
    <ligand>
        <name>S-adenosyl-L-methionine</name>
        <dbReference type="ChEBI" id="CHEBI:59789"/>
    </ligand>
</feature>
<feature type="binding site" evidence="1">
    <location>
        <position position="53"/>
    </location>
    <ligand>
        <name>S-adenosyl-L-methionine</name>
        <dbReference type="ChEBI" id="CHEBI:59789"/>
    </ligand>
</feature>
<feature type="binding site" evidence="1">
    <location>
        <position position="79"/>
    </location>
    <ligand>
        <name>S-adenosyl-L-methionine</name>
        <dbReference type="ChEBI" id="CHEBI:59789"/>
    </ligand>
</feature>
<feature type="binding site" evidence="1">
    <location>
        <position position="100"/>
    </location>
    <ligand>
        <name>S-adenosyl-L-methionine</name>
        <dbReference type="ChEBI" id="CHEBI:59789"/>
    </ligand>
</feature>
<feature type="binding site" evidence="1">
    <location>
        <position position="107"/>
    </location>
    <ligand>
        <name>S-adenosyl-L-methionine</name>
        <dbReference type="ChEBI" id="CHEBI:59789"/>
    </ligand>
</feature>
<name>RSMH_DESHY</name>
<protein>
    <recommendedName>
        <fullName evidence="1">Ribosomal RNA small subunit methyltransferase H</fullName>
        <ecNumber evidence="1">2.1.1.199</ecNumber>
    </recommendedName>
    <alternativeName>
        <fullName evidence="1">16S rRNA m(4)C1402 methyltransferase</fullName>
    </alternativeName>
    <alternativeName>
        <fullName evidence="1">rRNA (cytosine-N(4)-)-methyltransferase RsmH</fullName>
    </alternativeName>
</protein>
<proteinExistence type="inferred from homology"/>
<organism>
    <name type="scientific">Desulfitobacterium hafniense (strain Y51)</name>
    <dbReference type="NCBI Taxonomy" id="138119"/>
    <lineage>
        <taxon>Bacteria</taxon>
        <taxon>Bacillati</taxon>
        <taxon>Bacillota</taxon>
        <taxon>Clostridia</taxon>
        <taxon>Eubacteriales</taxon>
        <taxon>Desulfitobacteriaceae</taxon>
        <taxon>Desulfitobacterium</taxon>
    </lineage>
</organism>
<keyword id="KW-0963">Cytoplasm</keyword>
<keyword id="KW-0489">Methyltransferase</keyword>
<keyword id="KW-1185">Reference proteome</keyword>
<keyword id="KW-0698">rRNA processing</keyword>
<keyword id="KW-0949">S-adenosyl-L-methionine</keyword>
<keyword id="KW-0808">Transferase</keyword>
<sequence>MEFHHVTVLLKETVDGVVRDPSGTYVDCTLGGAGHSGYVLSRLSEKGKLVGFDQDPLAIKNAQDKFAGDPRVFLVNRNFEGLEESLQSLELLPVQGVLFDLGVSSPQLDEAERGFSYMQDAELDMRMNPQNPLSAKTLVNEGKAEMLAEILWKYGEEKWSKRIVEFIVEARKQKSITTTGELVDIIKRAIPAGARREGPHPAKRTFQALRIAVNDELGVLERALDQVIRCLAPGGRVGVITFHSLEDRIVKETFNSWLGRCTCPPVFPVCQCGARAMARLVHRKPILPSPQEIEANPRARSAKLRIAEKL</sequence>
<gene>
    <name evidence="1" type="primary">rsmH</name>
    <name type="synonym">mraW</name>
    <name type="ordered locus">DSY2915</name>
</gene>
<evidence type="ECO:0000255" key="1">
    <source>
        <dbReference type="HAMAP-Rule" id="MF_01007"/>
    </source>
</evidence>
<reference key="1">
    <citation type="journal article" date="2006" name="J. Bacteriol.">
        <title>Complete genome sequence of the dehalorespiring bacterium Desulfitobacterium hafniense Y51 and comparison with Dehalococcoides ethenogenes 195.</title>
        <authorList>
            <person name="Nonaka H."/>
            <person name="Keresztes G."/>
            <person name="Shinoda Y."/>
            <person name="Ikenaga Y."/>
            <person name="Abe M."/>
            <person name="Naito K."/>
            <person name="Inatomi K."/>
            <person name="Furukawa K."/>
            <person name="Inui M."/>
            <person name="Yukawa H."/>
        </authorList>
    </citation>
    <scope>NUCLEOTIDE SEQUENCE [LARGE SCALE GENOMIC DNA]</scope>
    <source>
        <strain>Y51</strain>
    </source>
</reference>
<comment type="function">
    <text evidence="1">Specifically methylates the N4 position of cytidine in position 1402 (C1402) of 16S rRNA.</text>
</comment>
<comment type="catalytic activity">
    <reaction evidence="1">
        <text>cytidine(1402) in 16S rRNA + S-adenosyl-L-methionine = N(4)-methylcytidine(1402) in 16S rRNA + S-adenosyl-L-homocysteine + H(+)</text>
        <dbReference type="Rhea" id="RHEA:42928"/>
        <dbReference type="Rhea" id="RHEA-COMP:10286"/>
        <dbReference type="Rhea" id="RHEA-COMP:10287"/>
        <dbReference type="ChEBI" id="CHEBI:15378"/>
        <dbReference type="ChEBI" id="CHEBI:57856"/>
        <dbReference type="ChEBI" id="CHEBI:59789"/>
        <dbReference type="ChEBI" id="CHEBI:74506"/>
        <dbReference type="ChEBI" id="CHEBI:82748"/>
        <dbReference type="EC" id="2.1.1.199"/>
    </reaction>
</comment>
<comment type="subcellular location">
    <subcellularLocation>
        <location evidence="1">Cytoplasm</location>
    </subcellularLocation>
</comment>
<comment type="similarity">
    <text evidence="1">Belongs to the methyltransferase superfamily. RsmH family.</text>
</comment>